<name>CSLD4_ORYSJ</name>
<proteinExistence type="evidence at transcript level"/>
<feature type="chain" id="PRO_0000319395" description="Cellulose synthase-like protein D4">
    <location>
        <begin position="1"/>
        <end position="1215"/>
    </location>
</feature>
<feature type="transmembrane region" description="Helical" evidence="1">
    <location>
        <begin position="321"/>
        <end position="341"/>
    </location>
</feature>
<feature type="transmembrane region" description="Helical" evidence="1">
    <location>
        <begin position="352"/>
        <end position="372"/>
    </location>
</feature>
<feature type="transmembrane region" description="Helical" evidence="1">
    <location>
        <begin position="988"/>
        <end position="1008"/>
    </location>
</feature>
<feature type="transmembrane region" description="Helical" evidence="1">
    <location>
        <begin position="1014"/>
        <end position="1034"/>
    </location>
</feature>
<feature type="transmembrane region" description="Helical" evidence="1">
    <location>
        <begin position="1060"/>
        <end position="1080"/>
    </location>
</feature>
<feature type="transmembrane region" description="Helical" evidence="1">
    <location>
        <begin position="1114"/>
        <end position="1134"/>
    </location>
</feature>
<feature type="transmembrane region" description="Helical" evidence="1">
    <location>
        <begin position="1147"/>
        <end position="1167"/>
    </location>
</feature>
<feature type="transmembrane region" description="Helical" evidence="1">
    <location>
        <begin position="1177"/>
        <end position="1197"/>
    </location>
</feature>
<feature type="region of interest" description="Disordered" evidence="2">
    <location>
        <begin position="24"/>
        <end position="46"/>
    </location>
</feature>
<feature type="region of interest" description="Disordered" evidence="2">
    <location>
        <begin position="206"/>
        <end position="231"/>
    </location>
</feature>
<feature type="compositionally biased region" description="Acidic residues" evidence="2">
    <location>
        <begin position="207"/>
        <end position="222"/>
    </location>
</feature>
<feature type="active site" evidence="1">
    <location>
        <position position="452"/>
    </location>
</feature>
<feature type="active site" evidence="1">
    <location>
        <position position="905"/>
    </location>
</feature>
<feature type="sequence conflict" description="In Ref. 6; AAL38529." evidence="3" ref="6">
    <original>RRKI</original>
    <variation>DAWV</variation>
    <location>
        <begin position="777"/>
        <end position="780"/>
    </location>
</feature>
<protein>
    <recommendedName>
        <fullName>Cellulose synthase-like protein D4</fullName>
        <ecNumber>2.4.1.-</ecNumber>
    </recommendedName>
    <alternativeName>
        <fullName>OsCslD4</fullName>
    </alternativeName>
</protein>
<evidence type="ECO:0000255" key="1"/>
<evidence type="ECO:0000256" key="2">
    <source>
        <dbReference type="SAM" id="MobiDB-lite"/>
    </source>
</evidence>
<evidence type="ECO:0000305" key="3"/>
<sequence>MSRRLSLPAGAPVTVAVSPVRSPGGDAVVRRGSGLTSPVPRHSLGSSTATLQVSPVRRSGGSRYLGASRDGGADESAEFVHYTVHIPPTPDRATASVASEAEAAAEAEEVHRPQRSYISGTIFTGGLNCATRGHVLNFSGEGGATAASRAAASGNMSCKMRGCDMPAFLNGGRPPCDCGFMICKECYAECAAGNCPGCKEAFSAGSDTDESDSVTDDDDDEAVSSSEERDQLPLTSMARKFSVVHSMKVPGAAANGNGKPAEFDHARWLFETKGTYGYGNALWPKDGHAHSGAGFVAADEPPNFGARCRRPLTRKTSVSQAILSPYRLLIAIRLVALGFFLAWRIRHPNPEAVWLWAMSVACEVWFAFSWLLDSLPKLCPVHRAADLAVLAERFESPTARNPKGRSDLPGIDVFVTSADPEKEPPLVTANTILSILAADYPVEKLACYLSDDGGALLSFEALAETASFARTWVPFCRKHGVEPRCPEAYFGQKRDFLKNKVRVDFVRERRKVKREYDEFKVRVNSLPEAIRRRSDAYNAGEELRARRRQQEEAAAAAAAGNGELGAAAVETAAVKATWMSDGSHWPGTWTCPAADHARGDHAGIIQAMLAPPTSEPVMGGEAAECGGLIDTTGVDVRLPMLVYVSREKRPGYDHNKKAGAMNALVRTSAIMSNGPFILNLDCDHYVHNSSALREGMCFMLDRGGDRVCFVQFPQRFEGVDPSDRYANHNLVFFDVSMRAMDGLQGPMYVGTGCVFRRTALYGFSPPRATEHHGWLGRRKIKLFLTKKKSMGKKTDRAEDDTEMMLPPIEDDDGGADIEASAMLPKRFGGSATFVASIPVAEYQGRLLQDTPGCHHGRPAGALAVPREPLDAATVAEAIGVISCFYEEKTEWGRRIGWIYGSVTEDVVTGYRMHNRGWRSVYCVTPRRDAFRGTAPINLTDRLHQVLRWATGSVEIFFSRNNALFASPRMKLLQRVAYFNAGMYPFTSVFLLAYCLLPAVSLFSGKFIVQRLSATFLAFLLVITLTLCLLALLEIKWSGITLHEWWRNEQFWVIGGTSAHPAAVLQGLLKVIAGVDISFTLTSKPGNGGGDGGVGGEGNDDEAFAELYEVRWSYLMVPPVTIMMVNAVAIAVAAARTLYSEFPQWSKLLGGAFFSFWVLCHLYPFAKGLLGRRGRVPTIVFVWSGLISMIISLLWVYINPPAGARERIGGGGFSFP</sequence>
<keyword id="KW-0961">Cell wall biogenesis/degradation</keyword>
<keyword id="KW-0328">Glycosyltransferase</keyword>
<keyword id="KW-0333">Golgi apparatus</keyword>
<keyword id="KW-0472">Membrane</keyword>
<keyword id="KW-1185">Reference proteome</keyword>
<keyword id="KW-0808">Transferase</keyword>
<keyword id="KW-0812">Transmembrane</keyword>
<keyword id="KW-1133">Transmembrane helix</keyword>
<gene>
    <name type="primary">CSLD4</name>
    <name type="ordered locus">Os12g0555600</name>
    <name type="ordered locus">LOC_Os12g36890</name>
    <name type="ORF">OsJ_035046</name>
</gene>
<comment type="function">
    <text>Thought to be a Golgi-localized beta-glycan synthase that polymerize the backbones of noncellulosic polysaccharides (hemicelluloses) of plant cell wall.</text>
</comment>
<comment type="subcellular location">
    <subcellularLocation>
        <location evidence="3">Golgi apparatus membrane</location>
        <topology evidence="3">Multi-pass membrane protein</topology>
    </subcellularLocation>
</comment>
<comment type="similarity">
    <text evidence="3">Belongs to the glycosyltransferase 2 family. Plant cellulose synthase-like D subfamily.</text>
</comment>
<comment type="sequence caution" evidence="3">
    <conflict type="erroneous gene model prediction">
        <sequence resource="EMBL-CDS" id="BAF30018"/>
    </conflict>
</comment>
<comment type="sequence caution" evidence="3">
    <conflict type="erroneous gene model prediction">
        <sequence resource="EMBL-CDS" id="EAZ20837"/>
    </conflict>
</comment>
<accession>Q2QNS6</accession>
<accession>A0A0N7KU71</accession>
<accession>A3CIC4</accession>
<accession>Q0IMP7</accession>
<accession>Q8W1N5</accession>
<organism>
    <name type="scientific">Oryza sativa subsp. japonica</name>
    <name type="common">Rice</name>
    <dbReference type="NCBI Taxonomy" id="39947"/>
    <lineage>
        <taxon>Eukaryota</taxon>
        <taxon>Viridiplantae</taxon>
        <taxon>Streptophyta</taxon>
        <taxon>Embryophyta</taxon>
        <taxon>Tracheophyta</taxon>
        <taxon>Spermatophyta</taxon>
        <taxon>Magnoliopsida</taxon>
        <taxon>Liliopsida</taxon>
        <taxon>Poales</taxon>
        <taxon>Poaceae</taxon>
        <taxon>BOP clade</taxon>
        <taxon>Oryzoideae</taxon>
        <taxon>Oryzeae</taxon>
        <taxon>Oryzinae</taxon>
        <taxon>Oryza</taxon>
        <taxon>Oryza sativa</taxon>
    </lineage>
</organism>
<reference key="1">
    <citation type="journal article" date="2005" name="BMC Biol.">
        <title>The sequence of rice chromosomes 11 and 12, rich in disease resistance genes and recent gene duplications.</title>
        <authorList>
            <consortium name="The rice chromosomes 11 and 12 sequencing consortia"/>
        </authorList>
    </citation>
    <scope>NUCLEOTIDE SEQUENCE [LARGE SCALE GENOMIC DNA]</scope>
    <source>
        <strain>cv. Nipponbare</strain>
    </source>
</reference>
<reference key="2">
    <citation type="journal article" date="2005" name="Nature">
        <title>The map-based sequence of the rice genome.</title>
        <authorList>
            <consortium name="International rice genome sequencing project (IRGSP)"/>
        </authorList>
    </citation>
    <scope>NUCLEOTIDE SEQUENCE [LARGE SCALE GENOMIC DNA]</scope>
    <source>
        <strain>cv. Nipponbare</strain>
    </source>
</reference>
<reference key="3">
    <citation type="journal article" date="2008" name="Nucleic Acids Res.">
        <title>The rice annotation project database (RAP-DB): 2008 update.</title>
        <authorList>
            <consortium name="The rice annotation project (RAP)"/>
        </authorList>
    </citation>
    <scope>GENOME REANNOTATION</scope>
    <source>
        <strain>cv. Nipponbare</strain>
    </source>
</reference>
<reference key="4">
    <citation type="journal article" date="2013" name="Rice">
        <title>Improvement of the Oryza sativa Nipponbare reference genome using next generation sequence and optical map data.</title>
        <authorList>
            <person name="Kawahara Y."/>
            <person name="de la Bastide M."/>
            <person name="Hamilton J.P."/>
            <person name="Kanamori H."/>
            <person name="McCombie W.R."/>
            <person name="Ouyang S."/>
            <person name="Schwartz D.C."/>
            <person name="Tanaka T."/>
            <person name="Wu J."/>
            <person name="Zhou S."/>
            <person name="Childs K.L."/>
            <person name="Davidson R.M."/>
            <person name="Lin H."/>
            <person name="Quesada-Ocampo L."/>
            <person name="Vaillancourt B."/>
            <person name="Sakai H."/>
            <person name="Lee S.S."/>
            <person name="Kim J."/>
            <person name="Numa H."/>
            <person name="Itoh T."/>
            <person name="Buell C.R."/>
            <person name="Matsumoto T."/>
        </authorList>
    </citation>
    <scope>GENOME REANNOTATION</scope>
    <source>
        <strain>cv. Nipponbare</strain>
    </source>
</reference>
<reference key="5">
    <citation type="journal article" date="2005" name="PLoS Biol.">
        <title>The genomes of Oryza sativa: a history of duplications.</title>
        <authorList>
            <person name="Yu J."/>
            <person name="Wang J."/>
            <person name="Lin W."/>
            <person name="Li S."/>
            <person name="Li H."/>
            <person name="Zhou J."/>
            <person name="Ni P."/>
            <person name="Dong W."/>
            <person name="Hu S."/>
            <person name="Zeng C."/>
            <person name="Zhang J."/>
            <person name="Zhang Y."/>
            <person name="Li R."/>
            <person name="Xu Z."/>
            <person name="Li S."/>
            <person name="Li X."/>
            <person name="Zheng H."/>
            <person name="Cong L."/>
            <person name="Lin L."/>
            <person name="Yin J."/>
            <person name="Geng J."/>
            <person name="Li G."/>
            <person name="Shi J."/>
            <person name="Liu J."/>
            <person name="Lv H."/>
            <person name="Li J."/>
            <person name="Wang J."/>
            <person name="Deng Y."/>
            <person name="Ran L."/>
            <person name="Shi X."/>
            <person name="Wang X."/>
            <person name="Wu Q."/>
            <person name="Li C."/>
            <person name="Ren X."/>
            <person name="Wang J."/>
            <person name="Wang X."/>
            <person name="Li D."/>
            <person name="Liu D."/>
            <person name="Zhang X."/>
            <person name="Ji Z."/>
            <person name="Zhao W."/>
            <person name="Sun Y."/>
            <person name="Zhang Z."/>
            <person name="Bao J."/>
            <person name="Han Y."/>
            <person name="Dong L."/>
            <person name="Ji J."/>
            <person name="Chen P."/>
            <person name="Wu S."/>
            <person name="Liu J."/>
            <person name="Xiao Y."/>
            <person name="Bu D."/>
            <person name="Tan J."/>
            <person name="Yang L."/>
            <person name="Ye C."/>
            <person name="Zhang J."/>
            <person name="Xu J."/>
            <person name="Zhou Y."/>
            <person name="Yu Y."/>
            <person name="Zhang B."/>
            <person name="Zhuang S."/>
            <person name="Wei H."/>
            <person name="Liu B."/>
            <person name="Lei M."/>
            <person name="Yu H."/>
            <person name="Li Y."/>
            <person name="Xu H."/>
            <person name="Wei S."/>
            <person name="He X."/>
            <person name="Fang L."/>
            <person name="Zhang Z."/>
            <person name="Zhang Y."/>
            <person name="Huang X."/>
            <person name="Su Z."/>
            <person name="Tong W."/>
            <person name="Li J."/>
            <person name="Tong Z."/>
            <person name="Li S."/>
            <person name="Ye J."/>
            <person name="Wang L."/>
            <person name="Fang L."/>
            <person name="Lei T."/>
            <person name="Chen C.-S."/>
            <person name="Chen H.-C."/>
            <person name="Xu Z."/>
            <person name="Li H."/>
            <person name="Huang H."/>
            <person name="Zhang F."/>
            <person name="Xu H."/>
            <person name="Li N."/>
            <person name="Zhao C."/>
            <person name="Li S."/>
            <person name="Dong L."/>
            <person name="Huang Y."/>
            <person name="Li L."/>
            <person name="Xi Y."/>
            <person name="Qi Q."/>
            <person name="Li W."/>
            <person name="Zhang B."/>
            <person name="Hu W."/>
            <person name="Zhang Y."/>
            <person name="Tian X."/>
            <person name="Jiao Y."/>
            <person name="Liang X."/>
            <person name="Jin J."/>
            <person name="Gao L."/>
            <person name="Zheng W."/>
            <person name="Hao B."/>
            <person name="Liu S.-M."/>
            <person name="Wang W."/>
            <person name="Yuan L."/>
            <person name="Cao M."/>
            <person name="McDermott J."/>
            <person name="Samudrala R."/>
            <person name="Wang J."/>
            <person name="Wong G.K.-S."/>
            <person name="Yang H."/>
        </authorList>
    </citation>
    <scope>NUCLEOTIDE SEQUENCE [LARGE SCALE GENOMIC DNA]</scope>
    <source>
        <strain>cv. Nipponbare</strain>
    </source>
</reference>
<reference key="6">
    <citation type="journal article" date="2002" name="Plant Physiol.">
        <title>Cellulose synthase-like genes of rice.</title>
        <authorList>
            <person name="Hazen S.P."/>
            <person name="Scott-Craig J.S."/>
            <person name="Walton J.D."/>
        </authorList>
    </citation>
    <scope>NUCLEOTIDE SEQUENCE [MRNA] OF 777-1215</scope>
</reference>
<reference key="7">
    <citation type="journal article" date="2007" name="Plant Physiol.">
        <title>OsCSLD1, a cellulose synthase-like D1 gene, is required for root hair morphogenesis in rice.</title>
        <authorList>
            <person name="Kim C.M."/>
            <person name="Park S.H."/>
            <person name="Je B.I."/>
            <person name="Park S.H."/>
            <person name="Park S.J."/>
            <person name="Piao H.L."/>
            <person name="Eun M.Y."/>
            <person name="Dolan L."/>
            <person name="Han C.-D."/>
        </authorList>
    </citation>
    <scope>TISSUE SPECIFICITY</scope>
</reference>
<dbReference type="EC" id="2.4.1.-"/>
<dbReference type="EMBL" id="DP000011">
    <property type="protein sequence ID" value="ABA99552.1"/>
    <property type="molecule type" value="Genomic_DNA"/>
</dbReference>
<dbReference type="EMBL" id="AP008218">
    <property type="protein sequence ID" value="BAF30018.1"/>
    <property type="status" value="ALT_SEQ"/>
    <property type="molecule type" value="Genomic_DNA"/>
</dbReference>
<dbReference type="EMBL" id="AP014968">
    <property type="protein sequence ID" value="BAT17602.1"/>
    <property type="molecule type" value="Genomic_DNA"/>
</dbReference>
<dbReference type="EMBL" id="CM000149">
    <property type="protein sequence ID" value="EAZ20837.1"/>
    <property type="status" value="ALT_SEQ"/>
    <property type="molecule type" value="Genomic_DNA"/>
</dbReference>
<dbReference type="EMBL" id="AF435644">
    <property type="protein sequence ID" value="AAL38529.1"/>
    <property type="molecule type" value="mRNA"/>
</dbReference>
<dbReference type="RefSeq" id="XP_015620379.1">
    <property type="nucleotide sequence ID" value="XM_015764893.1"/>
</dbReference>
<dbReference type="SMR" id="Q2QNS6"/>
<dbReference type="FunCoup" id="Q2QNS6">
    <property type="interactions" value="255"/>
</dbReference>
<dbReference type="STRING" id="39947.Q2QNS6"/>
<dbReference type="CAZy" id="GT2">
    <property type="family name" value="Glycosyltransferase Family 2"/>
</dbReference>
<dbReference type="PaxDb" id="39947-Q2QNS6"/>
<dbReference type="EnsemblPlants" id="Os12t0555600-01">
    <property type="protein sequence ID" value="Os12t0555600-01"/>
    <property type="gene ID" value="Os12g0555600"/>
</dbReference>
<dbReference type="Gramene" id="Os12t0555600-01">
    <property type="protein sequence ID" value="Os12t0555600-01"/>
    <property type="gene ID" value="Os12g0555600"/>
</dbReference>
<dbReference type="KEGG" id="dosa:Os12g0555600"/>
<dbReference type="eggNOG" id="ENOG502QQG2">
    <property type="taxonomic scope" value="Eukaryota"/>
</dbReference>
<dbReference type="HOGENOM" id="CLU_001418_1_0_1"/>
<dbReference type="InParanoid" id="Q2QNS6"/>
<dbReference type="OMA" id="TEHRGWF"/>
<dbReference type="OrthoDB" id="72851at2759"/>
<dbReference type="PlantReactome" id="R-OSA-1119314">
    <property type="pathway name" value="Cellulose biosynthesis"/>
</dbReference>
<dbReference type="PlantReactome" id="R-OSA-9627657">
    <property type="pathway name" value="Regulation of leaf development"/>
</dbReference>
<dbReference type="Proteomes" id="UP000000763">
    <property type="component" value="Chromosome 12"/>
</dbReference>
<dbReference type="Proteomes" id="UP000007752">
    <property type="component" value="Chromosome 12"/>
</dbReference>
<dbReference type="Proteomes" id="UP000059680">
    <property type="component" value="Chromosome 12"/>
</dbReference>
<dbReference type="GO" id="GO:0005794">
    <property type="term" value="C:Golgi apparatus"/>
    <property type="evidence" value="ECO:0000314"/>
    <property type="project" value="UniProtKB"/>
</dbReference>
<dbReference type="GO" id="GO:0000139">
    <property type="term" value="C:Golgi membrane"/>
    <property type="evidence" value="ECO:0007669"/>
    <property type="project" value="UniProtKB-SubCell"/>
</dbReference>
<dbReference type="GO" id="GO:0005886">
    <property type="term" value="C:plasma membrane"/>
    <property type="evidence" value="ECO:0000318"/>
    <property type="project" value="GO_Central"/>
</dbReference>
<dbReference type="GO" id="GO:0016760">
    <property type="term" value="F:cellulose synthase (UDP-forming) activity"/>
    <property type="evidence" value="ECO:0007669"/>
    <property type="project" value="InterPro"/>
</dbReference>
<dbReference type="GO" id="GO:0071555">
    <property type="term" value="P:cell wall organization"/>
    <property type="evidence" value="ECO:0007669"/>
    <property type="project" value="UniProtKB-KW"/>
</dbReference>
<dbReference type="GO" id="GO:0030244">
    <property type="term" value="P:cellulose biosynthetic process"/>
    <property type="evidence" value="ECO:0007669"/>
    <property type="project" value="InterPro"/>
</dbReference>
<dbReference type="GO" id="GO:0071669">
    <property type="term" value="P:plant-type cell wall organization or biogenesis"/>
    <property type="evidence" value="ECO:0000314"/>
    <property type="project" value="UniProtKB"/>
</dbReference>
<dbReference type="GO" id="GO:0009833">
    <property type="term" value="P:plant-type primary cell wall biogenesis"/>
    <property type="evidence" value="ECO:0000318"/>
    <property type="project" value="GO_Central"/>
</dbReference>
<dbReference type="FunFam" id="3.90.550.10:FF:000027">
    <property type="entry name" value="Cellulose synthase-like protein D4"/>
    <property type="match status" value="1"/>
</dbReference>
<dbReference type="Gene3D" id="3.90.550.10">
    <property type="entry name" value="Spore Coat Polysaccharide Biosynthesis Protein SpsA, Chain A"/>
    <property type="match status" value="1"/>
</dbReference>
<dbReference type="InterPro" id="IPR005150">
    <property type="entry name" value="Cellulose_synth"/>
</dbReference>
<dbReference type="InterPro" id="IPR029044">
    <property type="entry name" value="Nucleotide-diphossugar_trans"/>
</dbReference>
<dbReference type="PANTHER" id="PTHR13301">
    <property type="entry name" value="X-BOX TRANSCRIPTION FACTOR-RELATED"/>
    <property type="match status" value="1"/>
</dbReference>
<dbReference type="Pfam" id="PF03552">
    <property type="entry name" value="Cellulose_synt"/>
    <property type="match status" value="1"/>
</dbReference>
<dbReference type="SUPFAM" id="SSF53448">
    <property type="entry name" value="Nucleotide-diphospho-sugar transferases"/>
    <property type="match status" value="1"/>
</dbReference>